<accession>Q0C8A1</accession>
<organism>
    <name type="scientific">Aspergillus terreus (strain NIH 2624 / FGSC A1156)</name>
    <dbReference type="NCBI Taxonomy" id="341663"/>
    <lineage>
        <taxon>Eukaryota</taxon>
        <taxon>Fungi</taxon>
        <taxon>Dikarya</taxon>
        <taxon>Ascomycota</taxon>
        <taxon>Pezizomycotina</taxon>
        <taxon>Eurotiomycetes</taxon>
        <taxon>Eurotiomycetidae</taxon>
        <taxon>Eurotiales</taxon>
        <taxon>Aspergillaceae</taxon>
        <taxon>Aspergillus</taxon>
        <taxon>Aspergillus subgen. Circumdati</taxon>
    </lineage>
</organism>
<evidence type="ECO:0000250" key="1">
    <source>
        <dbReference type="UniProtKB" id="P04798"/>
    </source>
</evidence>
<evidence type="ECO:0000255" key="2"/>
<evidence type="ECO:0000255" key="3">
    <source>
        <dbReference type="PROSITE-ProRule" id="PRU00498"/>
    </source>
</evidence>
<evidence type="ECO:0000269" key="4">
    <source>
    </source>
</evidence>
<evidence type="ECO:0000269" key="5">
    <source>
    </source>
</evidence>
<evidence type="ECO:0000269" key="6">
    <source>
    </source>
</evidence>
<evidence type="ECO:0000269" key="7">
    <source>
    </source>
</evidence>
<evidence type="ECO:0000269" key="8">
    <source>
    </source>
</evidence>
<evidence type="ECO:0000303" key="9">
    <source>
    </source>
</evidence>
<evidence type="ECO:0000305" key="10"/>
<name>TRT6_ASPTN</name>
<comment type="function">
    <text evidence="4 5 6 7 8">Cytochrome P450 monooxygenase; part of the gene cluster that mediates the biosynthesis of terretonin, a fungal meroterpenoid that acts as a mycotoxin (PubMed:22549923, PubMed:23116177, PubMed:25671343). The first step of the pathway is the synthesis of 3,5-dimethylorsellinic acid (DMOA) by the polyketide synthase trt4 (PubMed:22549923, PubMed:23116177). DMOA is then prenylated into farnesyl-DMOA by the polyprenyl transferase trt2 (PubMed:22549923, PubMed:22782788, PubMed:23116177). Methylation by the methyltransferase trt5 then leads to farnesyl-DMOA methyl ester which is further subject to epoxidation by the FAD-dependent monooxygenase trt8 to yield epoxyfarnesyl-DMOA methyl ester (PubMed:22549923, PubMed:22782788, PubMed:23116177). Cyclization of epoxyfarnesyl-DMOA methyl ester by the terpene cyclase trt1 leads to a tetracycle intermediate which is in turn converted to preterretonin (PubMed:22549923, PubMed:22782788, PubMed:23116177). Dehydrogenase trt9 comes next to transform preterretonin to preterrenoid (PubMed:22549923, PubMed:23116177). The FAD-dependent monooxygenase trt3 is then required for the C-hydroxylation at C16 of preterrenoid to yield terrenoid (PubMed:22549923, PubMed:23116177). The cytochrome P450 trt6 catalyzes three successive oxidations to transform terrenoid into an unstable intermediate, which then undergoes the D-ring expansion and unusual rearrangement of the methoxy group to afford the core skeleton of terretonin (PubMed:25671343, PubMed:28759016). Trt14 catalyzes the D-ring expansion of terretonin involving intramolecular methoxy rearrangement as well as the hydrolysis of the expanded D-ring and the methyl ester moiety (PubMed:25671343, PubMed:28759016). Finally, the nonheme iron-dependent dioxygenase trt7 accomplishes the last two oxidation reactions steps to complete the biosynthesis of terretonin (PubMed:25671343). Terretonin C is produced via spontaneous decarboxylation of the terretonin precursor (PubMed:23116177). Another shunt product of the terretonin biosynthesis is dihydrofarnesyl-DMOA, derived from epoxyfarnesyl-DMOA through hydrolysis of the epoxide (PubMed:22549923, PubMed:22782788, PubMed:23116177).</text>
</comment>
<comment type="cofactor">
    <cofactor evidence="1">
        <name>heme</name>
        <dbReference type="ChEBI" id="CHEBI:30413"/>
    </cofactor>
</comment>
<comment type="pathway">
    <text evidence="6">Secondary metabolite biosynthesis; terpenoid biosynthesis.</text>
</comment>
<comment type="subcellular location">
    <subcellularLocation>
        <location evidence="2">Membrane</location>
        <topology evidence="2">Single-pass membrane protein</topology>
    </subcellularLocation>
</comment>
<comment type="disruption phenotype">
    <text evidence="6">Impairs the synthesis of terretonin but accumulates terrenoid (PubMed:23116177).</text>
</comment>
<comment type="similarity">
    <text evidence="10">Belongs to the cytochrome P450 family.</text>
</comment>
<proteinExistence type="evidence at protein level"/>
<dbReference type="EC" id="1.-.-.-" evidence="7"/>
<dbReference type="EMBL" id="CH476609">
    <property type="protein sequence ID" value="EAU29532.1"/>
    <property type="molecule type" value="Genomic_DNA"/>
</dbReference>
<dbReference type="RefSeq" id="XP_001209385.1">
    <property type="nucleotide sequence ID" value="XM_001209385.1"/>
</dbReference>
<dbReference type="SMR" id="Q0C8A1"/>
<dbReference type="STRING" id="341663.Q0C8A1"/>
<dbReference type="GlyCosmos" id="Q0C8A1">
    <property type="glycosylation" value="2 sites, No reported glycans"/>
</dbReference>
<dbReference type="EnsemblFungi" id="EAU29532">
    <property type="protein sequence ID" value="EAU29532"/>
    <property type="gene ID" value="ATEG_10083"/>
</dbReference>
<dbReference type="GeneID" id="4319490"/>
<dbReference type="VEuPathDB" id="FungiDB:ATEG_10083"/>
<dbReference type="eggNOG" id="KOG0158">
    <property type="taxonomic scope" value="Eukaryota"/>
</dbReference>
<dbReference type="HOGENOM" id="CLU_022195_0_3_1"/>
<dbReference type="OMA" id="THLRMIP"/>
<dbReference type="OrthoDB" id="1844152at2759"/>
<dbReference type="UniPathway" id="UPA00213"/>
<dbReference type="Proteomes" id="UP000007963">
    <property type="component" value="Unassembled WGS sequence"/>
</dbReference>
<dbReference type="GO" id="GO:0016020">
    <property type="term" value="C:membrane"/>
    <property type="evidence" value="ECO:0007669"/>
    <property type="project" value="UniProtKB-SubCell"/>
</dbReference>
<dbReference type="GO" id="GO:0020037">
    <property type="term" value="F:heme binding"/>
    <property type="evidence" value="ECO:0007669"/>
    <property type="project" value="InterPro"/>
</dbReference>
<dbReference type="GO" id="GO:0005506">
    <property type="term" value="F:iron ion binding"/>
    <property type="evidence" value="ECO:0007669"/>
    <property type="project" value="InterPro"/>
</dbReference>
<dbReference type="GO" id="GO:0004497">
    <property type="term" value="F:monooxygenase activity"/>
    <property type="evidence" value="ECO:0007669"/>
    <property type="project" value="UniProtKB-KW"/>
</dbReference>
<dbReference type="GO" id="GO:0016705">
    <property type="term" value="F:oxidoreductase activity, acting on paired donors, with incorporation or reduction of molecular oxygen"/>
    <property type="evidence" value="ECO:0007669"/>
    <property type="project" value="InterPro"/>
</dbReference>
<dbReference type="GO" id="GO:0019748">
    <property type="term" value="P:secondary metabolic process"/>
    <property type="evidence" value="ECO:0007669"/>
    <property type="project" value="UniProtKB-ARBA"/>
</dbReference>
<dbReference type="GO" id="GO:0016114">
    <property type="term" value="P:terpenoid biosynthetic process"/>
    <property type="evidence" value="ECO:0007669"/>
    <property type="project" value="UniProtKB-UniPathway"/>
</dbReference>
<dbReference type="CDD" id="cd11041">
    <property type="entry name" value="CYP503A1-like"/>
    <property type="match status" value="1"/>
</dbReference>
<dbReference type="Gene3D" id="1.10.630.10">
    <property type="entry name" value="Cytochrome P450"/>
    <property type="match status" value="1"/>
</dbReference>
<dbReference type="InterPro" id="IPR001128">
    <property type="entry name" value="Cyt_P450"/>
</dbReference>
<dbReference type="InterPro" id="IPR017972">
    <property type="entry name" value="Cyt_P450_CS"/>
</dbReference>
<dbReference type="InterPro" id="IPR002403">
    <property type="entry name" value="Cyt_P450_E_grp-IV"/>
</dbReference>
<dbReference type="InterPro" id="IPR036396">
    <property type="entry name" value="Cyt_P450_sf"/>
</dbReference>
<dbReference type="PANTHER" id="PTHR46206">
    <property type="entry name" value="CYTOCHROME P450"/>
    <property type="match status" value="1"/>
</dbReference>
<dbReference type="PANTHER" id="PTHR46206:SF2">
    <property type="entry name" value="CYTOCHROME P450 MONOOXYGENASE AUSG-RELATED"/>
    <property type="match status" value="1"/>
</dbReference>
<dbReference type="Pfam" id="PF00067">
    <property type="entry name" value="p450"/>
    <property type="match status" value="1"/>
</dbReference>
<dbReference type="PRINTS" id="PR00465">
    <property type="entry name" value="EP450IV"/>
</dbReference>
<dbReference type="SUPFAM" id="SSF48264">
    <property type="entry name" value="Cytochrome P450"/>
    <property type="match status" value="1"/>
</dbReference>
<dbReference type="PROSITE" id="PS00086">
    <property type="entry name" value="CYTOCHROME_P450"/>
    <property type="match status" value="1"/>
</dbReference>
<protein>
    <recommendedName>
        <fullName evidence="9">Cytochrome P450 monooxygenase trt6</fullName>
        <ecNumber evidence="7">1.-.-.-</ecNumber>
    </recommendedName>
    <alternativeName>
        <fullName evidence="9">Terretonin synthesis protein 6</fullName>
    </alternativeName>
</protein>
<gene>
    <name evidence="9" type="primary">trt6</name>
    <name type="ORF">ATEG_10083</name>
</gene>
<feature type="chain" id="PRO_0000436595" description="Cytochrome P450 monooxygenase trt6">
    <location>
        <begin position="1"/>
        <end position="489"/>
    </location>
</feature>
<feature type="transmembrane region" description="Helical" evidence="2">
    <location>
        <begin position="10"/>
        <end position="30"/>
    </location>
</feature>
<feature type="binding site" description="axial binding residue" evidence="1">
    <location>
        <position position="430"/>
    </location>
    <ligand>
        <name>heme</name>
        <dbReference type="ChEBI" id="CHEBI:30413"/>
    </ligand>
    <ligandPart>
        <name>Fe</name>
        <dbReference type="ChEBI" id="CHEBI:18248"/>
    </ligandPart>
</feature>
<feature type="glycosylation site" description="N-linked (GlcNAc...) asparagine" evidence="3">
    <location>
        <position position="364"/>
    </location>
</feature>
<feature type="glycosylation site" description="N-linked (GlcNAc...) asparagine" evidence="3">
    <location>
        <position position="407"/>
    </location>
</feature>
<reference key="1">
    <citation type="submission" date="2005-09" db="EMBL/GenBank/DDBJ databases">
        <title>Annotation of the Aspergillus terreus NIH2624 genome.</title>
        <authorList>
            <person name="Birren B.W."/>
            <person name="Lander E.S."/>
            <person name="Galagan J.E."/>
            <person name="Nusbaum C."/>
            <person name="Devon K."/>
            <person name="Henn M."/>
            <person name="Ma L.-J."/>
            <person name="Jaffe D.B."/>
            <person name="Butler J."/>
            <person name="Alvarez P."/>
            <person name="Gnerre S."/>
            <person name="Grabherr M."/>
            <person name="Kleber M."/>
            <person name="Mauceli E.W."/>
            <person name="Brockman W."/>
            <person name="Rounsley S."/>
            <person name="Young S.K."/>
            <person name="LaButti K."/>
            <person name="Pushparaj V."/>
            <person name="DeCaprio D."/>
            <person name="Crawford M."/>
            <person name="Koehrsen M."/>
            <person name="Engels R."/>
            <person name="Montgomery P."/>
            <person name="Pearson M."/>
            <person name="Howarth C."/>
            <person name="Larson L."/>
            <person name="Luoma S."/>
            <person name="White J."/>
            <person name="Alvarado L."/>
            <person name="Kodira C.D."/>
            <person name="Zeng Q."/>
            <person name="Oleary S."/>
            <person name="Yandava C."/>
            <person name="Denning D.W."/>
            <person name="Nierman W.C."/>
            <person name="Milne T."/>
            <person name="Madden K."/>
        </authorList>
    </citation>
    <scope>NUCLEOTIDE SEQUENCE [LARGE SCALE GENOMIC DNA]</scope>
    <source>
        <strain>NIH 2624 / FGSC A1156</strain>
    </source>
</reference>
<reference key="2">
    <citation type="journal article" date="2012" name="ChemBioChem">
        <title>Identification of a key prenyltransferase involved in biosynthesis of the most abundant fungal meroterpenoids derived from 3,5-dimethylorsellinic acid.</title>
        <authorList>
            <person name="Itoh T."/>
            <person name="Tokunaga K."/>
            <person name="Radhakrishnan E.K."/>
            <person name="Fujii I."/>
            <person name="Abe I."/>
            <person name="Ebizuka Y."/>
            <person name="Kushiro T."/>
        </authorList>
    </citation>
    <scope>FUNCTION</scope>
</reference>
<reference key="3">
    <citation type="journal article" date="2012" name="ChemBioChem">
        <title>Terretonin biosynthesis requires methylation as essential step for cyclization.</title>
        <authorList>
            <person name="Matsuda Y."/>
            <person name="Awakawa T."/>
            <person name="Itoh T."/>
            <person name="Wakimoto T."/>
            <person name="Kushiro T."/>
            <person name="Fujii I."/>
            <person name="Ebizuka Y."/>
            <person name="Abe I."/>
        </authorList>
    </citation>
    <scope>FUNCTION</scope>
</reference>
<reference key="4">
    <citation type="journal article" date="2012" name="Org. Lett.">
        <title>Molecular genetic characterization of a cluster in A. terreus for biosynthesis of the meroterpenoid terretonin.</title>
        <authorList>
            <person name="Guo C.J."/>
            <person name="Knox B.P."/>
            <person name="Chiang Y.M."/>
            <person name="Lo H.C."/>
            <person name="Sanchez J.F."/>
            <person name="Lee K.H."/>
            <person name="Oakley B.R."/>
            <person name="Bruno K.S."/>
            <person name="Wang C.C."/>
        </authorList>
    </citation>
    <scope>FUNCTION</scope>
    <scope>DISRUPTION PHENOTYPE</scope>
</reference>
<reference key="5">
    <citation type="journal article" date="2015" name="J. Am. Chem. Soc.">
        <title>Uncovering the unusual D-ring construction in terretonin biosynthesis by collaboration of a multifunctional cytochrome P450 and a unique isomerase.</title>
        <authorList>
            <person name="Matsuda Y."/>
            <person name="Iwabuchi T."/>
            <person name="Wakimoto T."/>
            <person name="Awakawa T."/>
            <person name="Abe I."/>
        </authorList>
    </citation>
    <scope>FUNCTION</scope>
    <scope>CATALYTIC ACTIVITY</scope>
</reference>
<reference key="6">
    <citation type="journal article" date="2017" name="Nat. Chem. Biol.">
        <title>Molecular basis for the unusual ring reconstruction in fungal meroterpenoid biogenesis.</title>
        <authorList>
            <person name="Mori T."/>
            <person name="Iwabuchi T."/>
            <person name="Hoshino S."/>
            <person name="Wang H."/>
            <person name="Matsuda Y."/>
            <person name="Abe I."/>
        </authorList>
    </citation>
    <scope>FUNCTION</scope>
</reference>
<keyword id="KW-0325">Glycoprotein</keyword>
<keyword id="KW-0349">Heme</keyword>
<keyword id="KW-0408">Iron</keyword>
<keyword id="KW-0472">Membrane</keyword>
<keyword id="KW-0479">Metal-binding</keyword>
<keyword id="KW-0503">Monooxygenase</keyword>
<keyword id="KW-0560">Oxidoreductase</keyword>
<keyword id="KW-1185">Reference proteome</keyword>
<keyword id="KW-0812">Transmembrane</keyword>
<keyword id="KW-1133">Transmembrane helix</keyword>
<sequence>MLEPVSTAQSLWSFGLWILVILSPVLFFASRELGILNAKKRFAKNGFEEVLAGLRKSDVFGLMTINGPKIVLAPKFAQEIRSNPALSVSAFSSSELHAHIRGFDVFRQGEADDILQDTVRSKITQSIGDLIQPLSEECSLTLKPKWTDSPEWHEVCPHTTILDIIARLSSRAFIGDELCRNPKWLRLTVDFTVDSFRAAEALNWWPYALRPLVARFLPSCLKLHKYIQDADNMMKPVLESRRQAQAKDPQKSYPDTIQWFEETAQGRPYDPVRLQLTLAFASIHTTADLVIQTILDLCSAKNWDELCRSLREEIISSFREEGWRKPLLAKLKIMDSALKESQRLKPVSIVGMGRIAKEAVKLSNNTIIPKGTRLLVSNTAMWDPEIYPDPRTYDPYRFLRLREASENESAGQLVSLSPTHLSFGLGKHACPGRFFAAAEVKIILCHILLKYDIKLADGCKPKPLRAGTNLVADPTAKLLVRRRQEEVAL</sequence>